<accession>Q99417</accession>
<accession>B2R4N0</accession>
<accession>Q5TA64</accession>
<accession>Q96HE2</accession>
<gene>
    <name evidence="6" type="primary">MYCBP</name>
    <name type="synonym">AMY1</name>
</gene>
<organism>
    <name type="scientific">Homo sapiens</name>
    <name type="common">Human</name>
    <dbReference type="NCBI Taxonomy" id="9606"/>
    <lineage>
        <taxon>Eukaryota</taxon>
        <taxon>Metazoa</taxon>
        <taxon>Chordata</taxon>
        <taxon>Craniata</taxon>
        <taxon>Vertebrata</taxon>
        <taxon>Euteleostomi</taxon>
        <taxon>Mammalia</taxon>
        <taxon>Eutheria</taxon>
        <taxon>Euarchontoglires</taxon>
        <taxon>Primates</taxon>
        <taxon>Haplorrhini</taxon>
        <taxon>Catarrhini</taxon>
        <taxon>Hominidae</taxon>
        <taxon>Homo</taxon>
    </lineage>
</organism>
<proteinExistence type="evidence at protein level"/>
<comment type="function">
    <text>May control the transcriptional activity of MYC. Stimulates the activation of E box-dependent transcription by MYC.</text>
</comment>
<comment type="subunit">
    <text evidence="1 2 3">Binds via its C-terminal region to the N-terminal region of MYC. Associates with AKAP1/S-AKAP84. Interacts with MYCBPAP. Interacts with CFAP91 (PubMed:12223483).</text>
</comment>
<comment type="interaction">
    <interactant intactId="EBI-716185">
        <id>Q99417</id>
    </interactant>
    <interactant intactId="EBI-2120060">
        <id>Q92667-2</id>
        <label>AKAP1</label>
    </interactant>
    <organismsDiffer>false</organismsDiffer>
    <experiments>2</experiments>
</comment>
<comment type="interaction">
    <interactant intactId="EBI-716185">
        <id>Q99417</id>
    </interactant>
    <interactant intactId="EBI-1237481">
        <id>O43823</id>
        <label>AKAP8</label>
    </interactant>
    <organismsDiffer>false</organismsDiffer>
    <experiments>3</experiments>
</comment>
<comment type="interaction">
    <interactant intactId="EBI-716185">
        <id>Q99417</id>
    </interactant>
    <interactant intactId="EBI-1044254">
        <id>Q9Y6D6</id>
        <label>ARFGEF1</label>
    </interactant>
    <organismsDiffer>false</organismsDiffer>
    <experiments>6</experiments>
</comment>
<comment type="interaction">
    <interactant intactId="EBI-716185">
        <id>Q99417</id>
    </interactant>
    <interactant intactId="EBI-2837511">
        <id>Q9Y6D5</id>
        <label>ARFGEF2</label>
    </interactant>
    <organismsDiffer>false</organismsDiffer>
    <experiments>8</experiments>
</comment>
<comment type="interaction">
    <interactant intactId="EBI-716185">
        <id>Q99417</id>
    </interactant>
    <interactant intactId="EBI-17172567">
        <id>Q7Z4T9-3</id>
        <label>CFAP91</label>
    </interactant>
    <organismsDiffer>false</organismsDiffer>
    <experiments>5</experiments>
</comment>
<comment type="interaction">
    <interactant intactId="EBI-716185">
        <id>Q99417</id>
    </interactant>
    <interactant intactId="EBI-1391585">
        <id>Q8TBZ2</id>
        <label>MYCBPAP</label>
    </interactant>
    <organismsDiffer>false</organismsDiffer>
    <experiments>4</experiments>
</comment>
<comment type="subcellular location">
    <subcellularLocation>
        <location>Cytoplasm</location>
    </subcellularLocation>
    <subcellularLocation>
        <location>Nucleus</location>
    </subcellularLocation>
    <subcellularLocation>
        <location>Mitochondrion</location>
    </subcellularLocation>
    <text>Translocates into the nucleus in the S phase of the cell cycle upon an increase of MYC expression. Found in the mitochondria when associated with AKAP1.</text>
</comment>
<comment type="tissue specificity">
    <text>Highly expressed in heart, placenta, pancreas, skeletal muscle and kidney. Also present at low levels in lung.</text>
</comment>
<comment type="similarity">
    <text evidence="5">Belongs to the AMY1 family.</text>
</comment>
<dbReference type="EMBL" id="D50692">
    <property type="protein sequence ID" value="BAA09338.1"/>
    <property type="molecule type" value="mRNA"/>
</dbReference>
<dbReference type="EMBL" id="BT007109">
    <property type="protein sequence ID" value="AAP35773.1"/>
    <property type="molecule type" value="mRNA"/>
</dbReference>
<dbReference type="EMBL" id="AB007191">
    <property type="protein sequence ID" value="BAA22408.1"/>
    <property type="molecule type" value="mRNA"/>
</dbReference>
<dbReference type="EMBL" id="AB451287">
    <property type="protein sequence ID" value="BAG70101.1"/>
    <property type="molecule type" value="mRNA"/>
</dbReference>
<dbReference type="EMBL" id="AB451419">
    <property type="protein sequence ID" value="BAG70233.1"/>
    <property type="molecule type" value="mRNA"/>
</dbReference>
<dbReference type="EMBL" id="AK311886">
    <property type="protein sequence ID" value="BAG34827.1"/>
    <property type="molecule type" value="mRNA"/>
</dbReference>
<dbReference type="EMBL" id="AL139260">
    <property type="status" value="NOT_ANNOTATED_CDS"/>
    <property type="molecule type" value="Genomic_DNA"/>
</dbReference>
<dbReference type="EMBL" id="BC008686">
    <property type="protein sequence ID" value="AAH08686.1"/>
    <property type="molecule type" value="mRNA"/>
</dbReference>
<dbReference type="CCDS" id="CCDS431.1"/>
<dbReference type="RefSeq" id="NP_036465.2">
    <property type="nucleotide sequence ID" value="NM_012333.5"/>
</dbReference>
<dbReference type="PDB" id="2YY0">
    <property type="method" value="X-ray"/>
    <property type="resolution" value="2.40 A"/>
    <property type="chains" value="A/B/C/D=42-94"/>
</dbReference>
<dbReference type="PDBsum" id="2YY0"/>
<dbReference type="SMR" id="Q99417"/>
<dbReference type="BioGRID" id="117673">
    <property type="interactions" value="110"/>
</dbReference>
<dbReference type="CORUM" id="Q99417"/>
<dbReference type="FunCoup" id="Q99417">
    <property type="interactions" value="2931"/>
</dbReference>
<dbReference type="IntAct" id="Q99417">
    <property type="interactions" value="73"/>
</dbReference>
<dbReference type="MINT" id="Q99417"/>
<dbReference type="STRING" id="9606.ENSP00000380702"/>
<dbReference type="GlyGen" id="Q99417">
    <property type="glycosylation" value="1 site, 1 O-linked glycan (1 site)"/>
</dbReference>
<dbReference type="iPTMnet" id="Q99417"/>
<dbReference type="PhosphoSitePlus" id="Q99417"/>
<dbReference type="BioMuta" id="MYCBP"/>
<dbReference type="jPOST" id="Q99417"/>
<dbReference type="MassIVE" id="Q99417"/>
<dbReference type="PaxDb" id="9606-ENSP00000380702"/>
<dbReference type="PeptideAtlas" id="Q99417"/>
<dbReference type="ProteomicsDB" id="78257"/>
<dbReference type="Pumba" id="Q99417"/>
<dbReference type="TopDownProteomics" id="Q99417"/>
<dbReference type="Antibodypedia" id="17669">
    <property type="antibodies" value="222 antibodies from 29 providers"/>
</dbReference>
<dbReference type="DNASU" id="26292"/>
<dbReference type="Ensembl" id="ENST00000397572.5">
    <property type="protein sequence ID" value="ENSP00000380702.2"/>
    <property type="gene ID" value="ENSG00000214114.9"/>
</dbReference>
<dbReference type="GeneID" id="26292"/>
<dbReference type="KEGG" id="hsa:26292"/>
<dbReference type="MANE-Select" id="ENST00000397572.5">
    <property type="protein sequence ID" value="ENSP00000380702.2"/>
    <property type="RefSeq nucleotide sequence ID" value="NM_012333.5"/>
    <property type="RefSeq protein sequence ID" value="NP_036465.2"/>
</dbReference>
<dbReference type="UCSC" id="uc001ccs.4">
    <property type="organism name" value="human"/>
</dbReference>
<dbReference type="AGR" id="HGNC:7554"/>
<dbReference type="CTD" id="26292"/>
<dbReference type="DisGeNET" id="26292"/>
<dbReference type="GeneCards" id="MYCBP"/>
<dbReference type="HGNC" id="HGNC:7554">
    <property type="gene designation" value="MYCBP"/>
</dbReference>
<dbReference type="HPA" id="ENSG00000214114">
    <property type="expression patterns" value="Low tissue specificity"/>
</dbReference>
<dbReference type="MIM" id="606535">
    <property type="type" value="gene"/>
</dbReference>
<dbReference type="neXtProt" id="NX_Q99417"/>
<dbReference type="OpenTargets" id="ENSG00000214114"/>
<dbReference type="PharmGKB" id="PA31354"/>
<dbReference type="VEuPathDB" id="HostDB:ENSG00000214114"/>
<dbReference type="eggNOG" id="ENOG502S2IC">
    <property type="taxonomic scope" value="Eukaryota"/>
</dbReference>
<dbReference type="GeneTree" id="ENSGT00390000017974"/>
<dbReference type="HOGENOM" id="CLU_135895_0_1_1"/>
<dbReference type="InParanoid" id="Q99417"/>
<dbReference type="OMA" id="MMHYKEE"/>
<dbReference type="OrthoDB" id="524165at2759"/>
<dbReference type="PAN-GO" id="Q99417">
    <property type="GO annotations" value="3 GO annotations based on evolutionary models"/>
</dbReference>
<dbReference type="PhylomeDB" id="Q99417"/>
<dbReference type="TreeFam" id="TF329224"/>
<dbReference type="PathwayCommons" id="Q99417"/>
<dbReference type="SignaLink" id="Q99417"/>
<dbReference type="BioGRID-ORCS" id="26292">
    <property type="hits" value="58 hits in 1116 CRISPR screens"/>
</dbReference>
<dbReference type="CD-CODE" id="DEE660B4">
    <property type="entry name" value="Stress granule"/>
</dbReference>
<dbReference type="EvolutionaryTrace" id="Q99417"/>
<dbReference type="GeneWiki" id="MYCBP"/>
<dbReference type="GenomeRNAi" id="26292"/>
<dbReference type="Pharos" id="Q99417">
    <property type="development level" value="Tbio"/>
</dbReference>
<dbReference type="PRO" id="PR:Q99417"/>
<dbReference type="Proteomes" id="UP000005640">
    <property type="component" value="Chromosome 1"/>
</dbReference>
<dbReference type="RNAct" id="Q99417">
    <property type="molecule type" value="protein"/>
</dbReference>
<dbReference type="Bgee" id="ENSG00000214114">
    <property type="expression patterns" value="Expressed in olfactory segment of nasal mucosa and 157 other cell types or tissues"/>
</dbReference>
<dbReference type="ExpressionAtlas" id="Q99417">
    <property type="expression patterns" value="baseline and differential"/>
</dbReference>
<dbReference type="GO" id="GO:0005737">
    <property type="term" value="C:cytoplasm"/>
    <property type="evidence" value="ECO:0000314"/>
    <property type="project" value="UniProtKB"/>
</dbReference>
<dbReference type="GO" id="GO:0005739">
    <property type="term" value="C:mitochondrion"/>
    <property type="evidence" value="ECO:0000314"/>
    <property type="project" value="HPA"/>
</dbReference>
<dbReference type="GO" id="GO:0005654">
    <property type="term" value="C:nucleoplasm"/>
    <property type="evidence" value="ECO:0000314"/>
    <property type="project" value="HPA"/>
</dbReference>
<dbReference type="GO" id="GO:0005634">
    <property type="term" value="C:nucleus"/>
    <property type="evidence" value="ECO:0000314"/>
    <property type="project" value="UniProtKB"/>
</dbReference>
<dbReference type="GO" id="GO:0003713">
    <property type="term" value="F:transcription coactivator activity"/>
    <property type="evidence" value="ECO:0000314"/>
    <property type="project" value="UniProtKB"/>
</dbReference>
<dbReference type="GO" id="GO:0006355">
    <property type="term" value="P:regulation of DNA-templated transcription"/>
    <property type="evidence" value="ECO:0000314"/>
    <property type="project" value="UniProtKB"/>
</dbReference>
<dbReference type="GO" id="GO:0007283">
    <property type="term" value="P:spermatogenesis"/>
    <property type="evidence" value="ECO:0000270"/>
    <property type="project" value="UniProtKB"/>
</dbReference>
<dbReference type="CDD" id="cd21937">
    <property type="entry name" value="ZIP_MycBP-like"/>
    <property type="match status" value="1"/>
</dbReference>
<dbReference type="Gene3D" id="6.10.250.1060">
    <property type="match status" value="1"/>
</dbReference>
<dbReference type="InterPro" id="IPR026060">
    <property type="entry name" value="AMY1"/>
</dbReference>
<dbReference type="PANTHER" id="PTHR13168">
    <property type="entry name" value="ASSOCIATE OF C-MYC AMY-1"/>
    <property type="match status" value="1"/>
</dbReference>
<dbReference type="PANTHER" id="PTHR13168:SF0">
    <property type="entry name" value="C-MYC-BINDING PROTEIN"/>
    <property type="match status" value="1"/>
</dbReference>
<dbReference type="PRINTS" id="PR02028">
    <property type="entry name" value="CMYCBINDINGP"/>
</dbReference>
<evidence type="ECO:0000269" key="1">
    <source>
    </source>
</evidence>
<evidence type="ECO:0000269" key="2">
    <source>
    </source>
</evidence>
<evidence type="ECO:0000269" key="3">
    <source>
    </source>
</evidence>
<evidence type="ECO:0000269" key="4">
    <source>
    </source>
</evidence>
<evidence type="ECO:0000305" key="5"/>
<evidence type="ECO:0000312" key="6">
    <source>
        <dbReference type="HGNC" id="HGNC:7554"/>
    </source>
</evidence>
<evidence type="ECO:0007829" key="7">
    <source>
        <dbReference type="PDB" id="2YY0"/>
    </source>
</evidence>
<feature type="initiator methionine" description="Removed" evidence="4">
    <location>
        <position position="1"/>
    </location>
</feature>
<feature type="chain" id="PRO_0000220980" description="c-Myc-binding protein">
    <location>
        <begin position="2"/>
        <end position="103"/>
    </location>
</feature>
<feature type="sequence conflict" description="In Ref. 1; BAA09338/BAA22408." evidence="5" ref="1">
    <original>L</original>
    <variation>V</variation>
    <location>
        <position position="65"/>
    </location>
</feature>
<feature type="helix" evidence="7">
    <location>
        <begin position="43"/>
        <end position="50"/>
    </location>
</feature>
<feature type="strand" evidence="7">
    <location>
        <begin position="51"/>
        <end position="54"/>
    </location>
</feature>
<feature type="helix" evidence="7">
    <location>
        <begin position="60"/>
        <end position="90"/>
    </location>
</feature>
<feature type="turn" evidence="7">
    <location>
        <begin position="91"/>
        <end position="93"/>
    </location>
</feature>
<name>MYCBP_HUMAN</name>
<sequence>MAHYKAADSKREQFRRYLEKSGVLDTLTKVLVALYEEPEKPNSALDFLKHHLGAATPENPEIELLRLELAEMKEKYEAIVEENKKLKAKLAQYEPPQEEKRAE</sequence>
<keyword id="KW-0002">3D-structure</keyword>
<keyword id="KW-0963">Cytoplasm</keyword>
<keyword id="KW-0903">Direct protein sequencing</keyword>
<keyword id="KW-0496">Mitochondrion</keyword>
<keyword id="KW-0539">Nucleus</keyword>
<keyword id="KW-1267">Proteomics identification</keyword>
<keyword id="KW-1185">Reference proteome</keyword>
<keyword id="KW-0804">Transcription</keyword>
<keyword id="KW-0805">Transcription regulation</keyword>
<protein>
    <recommendedName>
        <fullName evidence="5">c-Myc-binding protein</fullName>
    </recommendedName>
    <alternativeName>
        <fullName>Associate of Myc 1</fullName>
        <shortName>AMY-1</shortName>
    </alternativeName>
</protein>
<reference key="1">
    <citation type="journal article" date="1998" name="Genes Cells">
        <title>AMY-1, a novel C-MYC binding protein that stimulates transcription activity of C-MYC.</title>
        <authorList>
            <person name="Taira T."/>
            <person name="Maeda J."/>
            <person name="Ohishi T."/>
            <person name="Kitaura H."/>
            <person name="Yoshida S."/>
            <person name="Kato H."/>
            <person name="Ikeda M."/>
            <person name="Tamai K."/>
            <person name="Iguchi-Ariga S.M.M."/>
            <person name="Ariga H."/>
        </authorList>
    </citation>
    <scope>NUCLEOTIDE SEQUENCE [MRNA]</scope>
    <source>
        <tissue>Placenta</tissue>
    </source>
</reference>
<reference key="2">
    <citation type="submission" date="2003-05" db="EMBL/GenBank/DDBJ databases">
        <title>Cloning of human full-length CDSs in BD Creator(TM) system donor vector.</title>
        <authorList>
            <person name="Kalnine N."/>
            <person name="Chen X."/>
            <person name="Rolfs A."/>
            <person name="Halleck A."/>
            <person name="Hines L."/>
            <person name="Eisenstein S."/>
            <person name="Koundinya M."/>
            <person name="Raphael J."/>
            <person name="Moreira D."/>
            <person name="Kelley T."/>
            <person name="LaBaer J."/>
            <person name="Lin Y."/>
            <person name="Phelan M."/>
            <person name="Farmer A."/>
        </authorList>
    </citation>
    <scope>NUCLEOTIDE SEQUENCE [LARGE SCALE MRNA]</scope>
</reference>
<reference key="3">
    <citation type="journal article" date="2004" name="Nat. Genet.">
        <title>Complete sequencing and characterization of 21,243 full-length human cDNAs.</title>
        <authorList>
            <person name="Ota T."/>
            <person name="Suzuki Y."/>
            <person name="Nishikawa T."/>
            <person name="Otsuki T."/>
            <person name="Sugiyama T."/>
            <person name="Irie R."/>
            <person name="Wakamatsu A."/>
            <person name="Hayashi K."/>
            <person name="Sato H."/>
            <person name="Nagai K."/>
            <person name="Kimura K."/>
            <person name="Makita H."/>
            <person name="Sekine M."/>
            <person name="Obayashi M."/>
            <person name="Nishi T."/>
            <person name="Shibahara T."/>
            <person name="Tanaka T."/>
            <person name="Ishii S."/>
            <person name="Yamamoto J."/>
            <person name="Saito K."/>
            <person name="Kawai Y."/>
            <person name="Isono Y."/>
            <person name="Nakamura Y."/>
            <person name="Nagahari K."/>
            <person name="Murakami K."/>
            <person name="Yasuda T."/>
            <person name="Iwayanagi T."/>
            <person name="Wagatsuma M."/>
            <person name="Shiratori A."/>
            <person name="Sudo H."/>
            <person name="Hosoiri T."/>
            <person name="Kaku Y."/>
            <person name="Kodaira H."/>
            <person name="Kondo H."/>
            <person name="Sugawara M."/>
            <person name="Takahashi M."/>
            <person name="Kanda K."/>
            <person name="Yokoi T."/>
            <person name="Furuya T."/>
            <person name="Kikkawa E."/>
            <person name="Omura Y."/>
            <person name="Abe K."/>
            <person name="Kamihara K."/>
            <person name="Katsuta N."/>
            <person name="Sato K."/>
            <person name="Tanikawa M."/>
            <person name="Yamazaki M."/>
            <person name="Ninomiya K."/>
            <person name="Ishibashi T."/>
            <person name="Yamashita H."/>
            <person name="Murakawa K."/>
            <person name="Fujimori K."/>
            <person name="Tanai H."/>
            <person name="Kimata M."/>
            <person name="Watanabe M."/>
            <person name="Hiraoka S."/>
            <person name="Chiba Y."/>
            <person name="Ishida S."/>
            <person name="Ono Y."/>
            <person name="Takiguchi S."/>
            <person name="Watanabe S."/>
            <person name="Yosida M."/>
            <person name="Hotuta T."/>
            <person name="Kusano J."/>
            <person name="Kanehori K."/>
            <person name="Takahashi-Fujii A."/>
            <person name="Hara H."/>
            <person name="Tanase T.-O."/>
            <person name="Nomura Y."/>
            <person name="Togiya S."/>
            <person name="Komai F."/>
            <person name="Hara R."/>
            <person name="Takeuchi K."/>
            <person name="Arita M."/>
            <person name="Imose N."/>
            <person name="Musashino K."/>
            <person name="Yuuki H."/>
            <person name="Oshima A."/>
            <person name="Sasaki N."/>
            <person name="Aotsuka S."/>
            <person name="Yoshikawa Y."/>
            <person name="Matsunawa H."/>
            <person name="Ichihara T."/>
            <person name="Shiohata N."/>
            <person name="Sano S."/>
            <person name="Moriya S."/>
            <person name="Momiyama H."/>
            <person name="Satoh N."/>
            <person name="Takami S."/>
            <person name="Terashima Y."/>
            <person name="Suzuki O."/>
            <person name="Nakagawa S."/>
            <person name="Senoh A."/>
            <person name="Mizoguchi H."/>
            <person name="Goto Y."/>
            <person name="Shimizu F."/>
            <person name="Wakebe H."/>
            <person name="Hishigaki H."/>
            <person name="Watanabe T."/>
            <person name="Sugiyama A."/>
            <person name="Takemoto M."/>
            <person name="Kawakami B."/>
            <person name="Yamazaki M."/>
            <person name="Watanabe K."/>
            <person name="Kumagai A."/>
            <person name="Itakura S."/>
            <person name="Fukuzumi Y."/>
            <person name="Fujimori Y."/>
            <person name="Komiyama M."/>
            <person name="Tashiro H."/>
            <person name="Tanigami A."/>
            <person name="Fujiwara T."/>
            <person name="Ono T."/>
            <person name="Yamada K."/>
            <person name="Fujii Y."/>
            <person name="Ozaki K."/>
            <person name="Hirao M."/>
            <person name="Ohmori Y."/>
            <person name="Kawabata A."/>
            <person name="Hikiji T."/>
            <person name="Kobatake N."/>
            <person name="Inagaki H."/>
            <person name="Ikema Y."/>
            <person name="Okamoto S."/>
            <person name="Okitani R."/>
            <person name="Kawakami T."/>
            <person name="Noguchi S."/>
            <person name="Itoh T."/>
            <person name="Shigeta K."/>
            <person name="Senba T."/>
            <person name="Matsumura K."/>
            <person name="Nakajima Y."/>
            <person name="Mizuno T."/>
            <person name="Morinaga M."/>
            <person name="Sasaki M."/>
            <person name="Togashi T."/>
            <person name="Oyama M."/>
            <person name="Hata H."/>
            <person name="Watanabe M."/>
            <person name="Komatsu T."/>
            <person name="Mizushima-Sugano J."/>
            <person name="Satoh T."/>
            <person name="Shirai Y."/>
            <person name="Takahashi Y."/>
            <person name="Nakagawa K."/>
            <person name="Okumura K."/>
            <person name="Nagase T."/>
            <person name="Nomura N."/>
            <person name="Kikuchi H."/>
            <person name="Masuho Y."/>
            <person name="Yamashita R."/>
            <person name="Nakai K."/>
            <person name="Yada T."/>
            <person name="Nakamura Y."/>
            <person name="Ohara O."/>
            <person name="Isogai T."/>
            <person name="Sugano S."/>
        </authorList>
    </citation>
    <scope>NUCLEOTIDE SEQUENCE [LARGE SCALE MRNA]</scope>
    <source>
        <tissue>Placenta</tissue>
    </source>
</reference>
<reference key="4">
    <citation type="journal article" date="2008" name="Nat. Methods">
        <title>Human protein factory for converting the transcriptome into an in vitro-expressed proteome.</title>
        <authorList>
            <person name="Goshima N."/>
            <person name="Kawamura Y."/>
            <person name="Fukumoto A."/>
            <person name="Miura A."/>
            <person name="Honma R."/>
            <person name="Satoh R."/>
            <person name="Wakamatsu A."/>
            <person name="Yamamoto J."/>
            <person name="Kimura K."/>
            <person name="Nishikawa T."/>
            <person name="Andoh T."/>
            <person name="Iida Y."/>
            <person name="Ishikawa K."/>
            <person name="Ito E."/>
            <person name="Kagawa N."/>
            <person name="Kaminaga C."/>
            <person name="Kanehori K."/>
            <person name="Kawakami B."/>
            <person name="Kenmochi K."/>
            <person name="Kimura R."/>
            <person name="Kobayashi M."/>
            <person name="Kuroita T."/>
            <person name="Kuwayama H."/>
            <person name="Maruyama Y."/>
            <person name="Matsuo K."/>
            <person name="Minami K."/>
            <person name="Mitsubori M."/>
            <person name="Mori M."/>
            <person name="Morishita R."/>
            <person name="Murase A."/>
            <person name="Nishikawa A."/>
            <person name="Nishikawa S."/>
            <person name="Okamoto T."/>
            <person name="Sakagami N."/>
            <person name="Sakamoto Y."/>
            <person name="Sasaki Y."/>
            <person name="Seki T."/>
            <person name="Sono S."/>
            <person name="Sugiyama A."/>
            <person name="Sumiya T."/>
            <person name="Takayama T."/>
            <person name="Takayama Y."/>
            <person name="Takeda H."/>
            <person name="Togashi T."/>
            <person name="Yahata K."/>
            <person name="Yamada H."/>
            <person name="Yanagisawa Y."/>
            <person name="Endo Y."/>
            <person name="Imamoto F."/>
            <person name="Kisu Y."/>
            <person name="Tanaka S."/>
            <person name="Isogai T."/>
            <person name="Imai J."/>
            <person name="Watanabe S."/>
            <person name="Nomura N."/>
        </authorList>
    </citation>
    <scope>NUCLEOTIDE SEQUENCE [LARGE SCALE MRNA]</scope>
</reference>
<reference key="5">
    <citation type="journal article" date="2006" name="Nature">
        <title>The DNA sequence and biological annotation of human chromosome 1.</title>
        <authorList>
            <person name="Gregory S.G."/>
            <person name="Barlow K.F."/>
            <person name="McLay K.E."/>
            <person name="Kaul R."/>
            <person name="Swarbreck D."/>
            <person name="Dunham A."/>
            <person name="Scott C.E."/>
            <person name="Howe K.L."/>
            <person name="Woodfine K."/>
            <person name="Spencer C.C.A."/>
            <person name="Jones M.C."/>
            <person name="Gillson C."/>
            <person name="Searle S."/>
            <person name="Zhou Y."/>
            <person name="Kokocinski F."/>
            <person name="McDonald L."/>
            <person name="Evans R."/>
            <person name="Phillips K."/>
            <person name="Atkinson A."/>
            <person name="Cooper R."/>
            <person name="Jones C."/>
            <person name="Hall R.E."/>
            <person name="Andrews T.D."/>
            <person name="Lloyd C."/>
            <person name="Ainscough R."/>
            <person name="Almeida J.P."/>
            <person name="Ambrose K.D."/>
            <person name="Anderson F."/>
            <person name="Andrew R.W."/>
            <person name="Ashwell R.I.S."/>
            <person name="Aubin K."/>
            <person name="Babbage A.K."/>
            <person name="Bagguley C.L."/>
            <person name="Bailey J."/>
            <person name="Beasley H."/>
            <person name="Bethel G."/>
            <person name="Bird C.P."/>
            <person name="Bray-Allen S."/>
            <person name="Brown J.Y."/>
            <person name="Brown A.J."/>
            <person name="Buckley D."/>
            <person name="Burton J."/>
            <person name="Bye J."/>
            <person name="Carder C."/>
            <person name="Chapman J.C."/>
            <person name="Clark S.Y."/>
            <person name="Clarke G."/>
            <person name="Clee C."/>
            <person name="Cobley V."/>
            <person name="Collier R.E."/>
            <person name="Corby N."/>
            <person name="Coville G.J."/>
            <person name="Davies J."/>
            <person name="Deadman R."/>
            <person name="Dunn M."/>
            <person name="Earthrowl M."/>
            <person name="Ellington A.G."/>
            <person name="Errington H."/>
            <person name="Frankish A."/>
            <person name="Frankland J."/>
            <person name="French L."/>
            <person name="Garner P."/>
            <person name="Garnett J."/>
            <person name="Gay L."/>
            <person name="Ghori M.R.J."/>
            <person name="Gibson R."/>
            <person name="Gilby L.M."/>
            <person name="Gillett W."/>
            <person name="Glithero R.J."/>
            <person name="Grafham D.V."/>
            <person name="Griffiths C."/>
            <person name="Griffiths-Jones S."/>
            <person name="Grocock R."/>
            <person name="Hammond S."/>
            <person name="Harrison E.S.I."/>
            <person name="Hart E."/>
            <person name="Haugen E."/>
            <person name="Heath P.D."/>
            <person name="Holmes S."/>
            <person name="Holt K."/>
            <person name="Howden P.J."/>
            <person name="Hunt A.R."/>
            <person name="Hunt S.E."/>
            <person name="Hunter G."/>
            <person name="Isherwood J."/>
            <person name="James R."/>
            <person name="Johnson C."/>
            <person name="Johnson D."/>
            <person name="Joy A."/>
            <person name="Kay M."/>
            <person name="Kershaw J.K."/>
            <person name="Kibukawa M."/>
            <person name="Kimberley A.M."/>
            <person name="King A."/>
            <person name="Knights A.J."/>
            <person name="Lad H."/>
            <person name="Laird G."/>
            <person name="Lawlor S."/>
            <person name="Leongamornlert D.A."/>
            <person name="Lloyd D.M."/>
            <person name="Loveland J."/>
            <person name="Lovell J."/>
            <person name="Lush M.J."/>
            <person name="Lyne R."/>
            <person name="Martin S."/>
            <person name="Mashreghi-Mohammadi M."/>
            <person name="Matthews L."/>
            <person name="Matthews N.S.W."/>
            <person name="McLaren S."/>
            <person name="Milne S."/>
            <person name="Mistry S."/>
            <person name="Moore M.J.F."/>
            <person name="Nickerson T."/>
            <person name="O'Dell C.N."/>
            <person name="Oliver K."/>
            <person name="Palmeiri A."/>
            <person name="Palmer S.A."/>
            <person name="Parker A."/>
            <person name="Patel D."/>
            <person name="Pearce A.V."/>
            <person name="Peck A.I."/>
            <person name="Pelan S."/>
            <person name="Phelps K."/>
            <person name="Phillimore B.J."/>
            <person name="Plumb R."/>
            <person name="Rajan J."/>
            <person name="Raymond C."/>
            <person name="Rouse G."/>
            <person name="Saenphimmachak C."/>
            <person name="Sehra H.K."/>
            <person name="Sheridan E."/>
            <person name="Shownkeen R."/>
            <person name="Sims S."/>
            <person name="Skuce C.D."/>
            <person name="Smith M."/>
            <person name="Steward C."/>
            <person name="Subramanian S."/>
            <person name="Sycamore N."/>
            <person name="Tracey A."/>
            <person name="Tromans A."/>
            <person name="Van Helmond Z."/>
            <person name="Wall M."/>
            <person name="Wallis J.M."/>
            <person name="White S."/>
            <person name="Whitehead S.L."/>
            <person name="Wilkinson J.E."/>
            <person name="Willey D.L."/>
            <person name="Williams H."/>
            <person name="Wilming L."/>
            <person name="Wray P.W."/>
            <person name="Wu Z."/>
            <person name="Coulson A."/>
            <person name="Vaudin M."/>
            <person name="Sulston J.E."/>
            <person name="Durbin R.M."/>
            <person name="Hubbard T."/>
            <person name="Wooster R."/>
            <person name="Dunham I."/>
            <person name="Carter N.P."/>
            <person name="McVean G."/>
            <person name="Ross M.T."/>
            <person name="Harrow J."/>
            <person name="Olson M.V."/>
            <person name="Beck S."/>
            <person name="Rogers J."/>
            <person name="Bentley D.R."/>
        </authorList>
    </citation>
    <scope>NUCLEOTIDE SEQUENCE [LARGE SCALE GENOMIC DNA]</scope>
</reference>
<reference key="6">
    <citation type="journal article" date="2004" name="Genome Res.">
        <title>The status, quality, and expansion of the NIH full-length cDNA project: the Mammalian Gene Collection (MGC).</title>
        <authorList>
            <consortium name="The MGC Project Team"/>
        </authorList>
    </citation>
    <scope>NUCLEOTIDE SEQUENCE [LARGE SCALE MRNA]</scope>
    <source>
        <tissue>Eye</tissue>
    </source>
</reference>
<reference key="7">
    <citation type="journal article" date="2003" name="Nat. Biotechnol.">
        <title>Exploring proteomes and analyzing protein processing by mass spectrometric identification of sorted N-terminal peptides.</title>
        <authorList>
            <person name="Gevaert K."/>
            <person name="Goethals M."/>
            <person name="Martens L."/>
            <person name="Van Damme J."/>
            <person name="Staes A."/>
            <person name="Thomas G.R."/>
            <person name="Vandekerckhove J."/>
        </authorList>
    </citation>
    <scope>PROTEIN SEQUENCE OF 2-11</scope>
    <source>
        <tissue>Platelet</tissue>
    </source>
</reference>
<reference key="8">
    <citation type="journal article" date="2001" name="J. Biol. Chem.">
        <title>AMY-1, a c-Myc-binding protein, is localized in the mitochondria of sperm by association with S-AKAP84, an anchor protein of cAMP-dependent protein kinase.</title>
        <authorList>
            <person name="Furusawa M."/>
            <person name="Ohnishi T."/>
            <person name="Taira T."/>
            <person name="Iguchi-Ariga S.M.M."/>
            <person name="Ariga H."/>
        </authorList>
    </citation>
    <scope>INTERACTION WITH AKAP1</scope>
</reference>
<reference key="9">
    <citation type="journal article" date="2002" name="Biochim. Biophys. Acta">
        <title>AMAP-1, a novel testis-specific AMY-1-binding protein, is differentially expressed during the course of spermatogenesis.</title>
        <authorList>
            <person name="Yukitake H."/>
            <person name="Furusawa M."/>
            <person name="Taira T."/>
            <person name="Iguchi-Ariga S.M.M."/>
            <person name="Ariga H."/>
        </authorList>
    </citation>
    <scope>INTERACTION WITH MYCBPAP</scope>
</reference>
<reference key="10">
    <citation type="journal article" date="2002" name="J. Biol. Chem.">
        <title>AAT-1, a novel testis-specific AMY-1-binding protein, forms a quaternary complex between AMY-1, A-kinase anchor protein 84 and a regulatory subunit of cAMP-dependent protein kinase and is phosphorylated by its kinase.</title>
        <authorList>
            <person name="Yukitake H."/>
            <person name="Furusawa M."/>
            <person name="Taira T."/>
            <person name="Iguchi-Ariga S.M.M."/>
            <person name="Ariga H."/>
        </authorList>
    </citation>
    <scope>INTERACTION WITH CFAP91</scope>
    <source>
        <tissue>Testis</tissue>
    </source>
</reference>
<reference key="11">
    <citation type="submission" date="2008-04" db="PDB data bank">
        <title>Crystal structure of c-myc-1 binding protein domain from Homo sapiens.</title>
        <authorList>
            <consortium name="RIKEN structural genomics initiative (RSGI)"/>
        </authorList>
    </citation>
    <scope>X-RAY CRYSTALLOGRAPHY (2.4 ANGSTROMS) OF 42-94</scope>
</reference>